<reference key="1">
    <citation type="journal article" date="2008" name="PLoS ONE">
        <title>Genome sequence of Brucella abortus vaccine strain S19 compared to virulent strains yields candidate virulence genes.</title>
        <authorList>
            <person name="Crasta O.R."/>
            <person name="Folkerts O."/>
            <person name="Fei Z."/>
            <person name="Mane S.P."/>
            <person name="Evans C."/>
            <person name="Martino-Catt S."/>
            <person name="Bricker B."/>
            <person name="Yu G."/>
            <person name="Du L."/>
            <person name="Sobral B.W."/>
        </authorList>
    </citation>
    <scope>NUCLEOTIDE SEQUENCE [LARGE SCALE GENOMIC DNA]</scope>
    <source>
        <strain>S19</strain>
    </source>
</reference>
<comment type="function">
    <text evidence="1">Protease subunit of a proteasome-like degradation complex believed to be a general protein degrading machinery.</text>
</comment>
<comment type="catalytic activity">
    <reaction evidence="1">
        <text>ATP-dependent cleavage of peptide bonds with broad specificity.</text>
        <dbReference type="EC" id="3.4.25.2"/>
    </reaction>
</comment>
<comment type="activity regulation">
    <text evidence="1">Allosterically activated by HslU binding.</text>
</comment>
<comment type="subunit">
    <text evidence="1">A double ring-shaped homohexamer of HslV is capped on each side by a ring-shaped HslU homohexamer. The assembly of the HslU/HslV complex is dependent on binding of ATP.</text>
</comment>
<comment type="subcellular location">
    <subcellularLocation>
        <location evidence="1">Cytoplasm</location>
    </subcellularLocation>
</comment>
<comment type="similarity">
    <text evidence="1">Belongs to the peptidase T1B family. HslV subfamily.</text>
</comment>
<proteinExistence type="inferred from homology"/>
<gene>
    <name evidence="1" type="primary">hslV</name>
    <name type="ordered locus">BAbS19_I19490</name>
</gene>
<name>HSLV_BRUA1</name>
<feature type="chain" id="PRO_1000100875" description="ATP-dependent protease subunit HslV">
    <location>
        <begin position="1"/>
        <end position="184"/>
    </location>
</feature>
<feature type="active site" evidence="1">
    <location>
        <position position="12"/>
    </location>
</feature>
<feature type="binding site" evidence="1">
    <location>
        <position position="166"/>
    </location>
    <ligand>
        <name>Na(+)</name>
        <dbReference type="ChEBI" id="CHEBI:29101"/>
    </ligand>
</feature>
<feature type="binding site" evidence="1">
    <location>
        <position position="169"/>
    </location>
    <ligand>
        <name>Na(+)</name>
        <dbReference type="ChEBI" id="CHEBI:29101"/>
    </ligand>
</feature>
<feature type="binding site" evidence="1">
    <location>
        <position position="172"/>
    </location>
    <ligand>
        <name>Na(+)</name>
        <dbReference type="ChEBI" id="CHEBI:29101"/>
    </ligand>
</feature>
<organism>
    <name type="scientific">Brucella abortus (strain S19)</name>
    <dbReference type="NCBI Taxonomy" id="430066"/>
    <lineage>
        <taxon>Bacteria</taxon>
        <taxon>Pseudomonadati</taxon>
        <taxon>Pseudomonadota</taxon>
        <taxon>Alphaproteobacteria</taxon>
        <taxon>Hyphomicrobiales</taxon>
        <taxon>Brucellaceae</taxon>
        <taxon>Brucella/Ochrobactrum group</taxon>
        <taxon>Brucella</taxon>
    </lineage>
</organism>
<protein>
    <recommendedName>
        <fullName evidence="1">ATP-dependent protease subunit HslV</fullName>
        <ecNumber evidence="1">3.4.25.2</ecNumber>
    </recommendedName>
</protein>
<dbReference type="EC" id="3.4.25.2" evidence="1"/>
<dbReference type="EMBL" id="CP000887">
    <property type="protein sequence ID" value="ACD73431.1"/>
    <property type="molecule type" value="Genomic_DNA"/>
</dbReference>
<dbReference type="RefSeq" id="WP_002967033.1">
    <property type="nucleotide sequence ID" value="NC_010742.1"/>
</dbReference>
<dbReference type="SMR" id="B2S979"/>
<dbReference type="MEROPS" id="T01.006"/>
<dbReference type="GeneID" id="93017609"/>
<dbReference type="KEGG" id="bmc:BAbS19_I19490"/>
<dbReference type="HOGENOM" id="CLU_093872_1_0_5"/>
<dbReference type="Proteomes" id="UP000002565">
    <property type="component" value="Chromosome 1"/>
</dbReference>
<dbReference type="GO" id="GO:0009376">
    <property type="term" value="C:HslUV protease complex"/>
    <property type="evidence" value="ECO:0007669"/>
    <property type="project" value="UniProtKB-UniRule"/>
</dbReference>
<dbReference type="GO" id="GO:0005839">
    <property type="term" value="C:proteasome core complex"/>
    <property type="evidence" value="ECO:0007669"/>
    <property type="project" value="InterPro"/>
</dbReference>
<dbReference type="GO" id="GO:0046872">
    <property type="term" value="F:metal ion binding"/>
    <property type="evidence" value="ECO:0007669"/>
    <property type="project" value="UniProtKB-KW"/>
</dbReference>
<dbReference type="GO" id="GO:0004298">
    <property type="term" value="F:threonine-type endopeptidase activity"/>
    <property type="evidence" value="ECO:0007669"/>
    <property type="project" value="UniProtKB-KW"/>
</dbReference>
<dbReference type="GO" id="GO:0051603">
    <property type="term" value="P:proteolysis involved in protein catabolic process"/>
    <property type="evidence" value="ECO:0007669"/>
    <property type="project" value="InterPro"/>
</dbReference>
<dbReference type="CDD" id="cd01913">
    <property type="entry name" value="protease_HslV"/>
    <property type="match status" value="1"/>
</dbReference>
<dbReference type="FunFam" id="3.60.20.10:FF:000002">
    <property type="entry name" value="ATP-dependent protease subunit HslV"/>
    <property type="match status" value="1"/>
</dbReference>
<dbReference type="Gene3D" id="3.60.20.10">
    <property type="entry name" value="Glutamine Phosphoribosylpyrophosphate, subunit 1, domain 1"/>
    <property type="match status" value="1"/>
</dbReference>
<dbReference type="HAMAP" id="MF_00248">
    <property type="entry name" value="HslV"/>
    <property type="match status" value="1"/>
</dbReference>
<dbReference type="InterPro" id="IPR022281">
    <property type="entry name" value="ATP-dep_Prtase_HsIV_su"/>
</dbReference>
<dbReference type="InterPro" id="IPR029055">
    <property type="entry name" value="Ntn_hydrolases_N"/>
</dbReference>
<dbReference type="InterPro" id="IPR001353">
    <property type="entry name" value="Proteasome_sua/b"/>
</dbReference>
<dbReference type="InterPro" id="IPR023333">
    <property type="entry name" value="Proteasome_suB-type"/>
</dbReference>
<dbReference type="NCBIfam" id="TIGR03692">
    <property type="entry name" value="ATP_dep_HslV"/>
    <property type="match status" value="1"/>
</dbReference>
<dbReference type="NCBIfam" id="NF003964">
    <property type="entry name" value="PRK05456.1"/>
    <property type="match status" value="1"/>
</dbReference>
<dbReference type="PANTHER" id="PTHR32194:SF7">
    <property type="entry name" value="ATP-DEPENDENT PROTEASE SUBUNIT HSLV"/>
    <property type="match status" value="1"/>
</dbReference>
<dbReference type="PANTHER" id="PTHR32194">
    <property type="entry name" value="METALLOPROTEASE TLDD"/>
    <property type="match status" value="1"/>
</dbReference>
<dbReference type="Pfam" id="PF00227">
    <property type="entry name" value="Proteasome"/>
    <property type="match status" value="1"/>
</dbReference>
<dbReference type="PIRSF" id="PIRSF039093">
    <property type="entry name" value="HslV"/>
    <property type="match status" value="1"/>
</dbReference>
<dbReference type="SUPFAM" id="SSF56235">
    <property type="entry name" value="N-terminal nucleophile aminohydrolases (Ntn hydrolases)"/>
    <property type="match status" value="1"/>
</dbReference>
<dbReference type="PROSITE" id="PS51476">
    <property type="entry name" value="PROTEASOME_BETA_2"/>
    <property type="match status" value="1"/>
</dbReference>
<sequence length="184" mass="19839">MIEHNPTTIYGTTIVTVRKDGKVVIAGDGQVSLGNTVMKGNARKVRRIGKGNVIAGFAGTTADAFTLLERLEAKLEQYPDQLMRASVELAKDWRTDRYLRKLEAMMLVADSKVTLALTGTGDVLEPEQGVMAIGSGGNYALAAARALIETDKSAEEIARKAMNIAADICIYTNHNIIVESLDAQ</sequence>
<accession>B2S979</accession>
<keyword id="KW-0021">Allosteric enzyme</keyword>
<keyword id="KW-0963">Cytoplasm</keyword>
<keyword id="KW-0378">Hydrolase</keyword>
<keyword id="KW-0479">Metal-binding</keyword>
<keyword id="KW-0645">Protease</keyword>
<keyword id="KW-0915">Sodium</keyword>
<keyword id="KW-0888">Threonine protease</keyword>
<evidence type="ECO:0000255" key="1">
    <source>
        <dbReference type="HAMAP-Rule" id="MF_00248"/>
    </source>
</evidence>